<name>AATA_PYRHO</name>
<gene>
    <name evidence="2" type="primary">atpA</name>
    <name type="ordered locus">PH1975</name>
</gene>
<keyword id="KW-0002">3D-structure</keyword>
<keyword id="KW-0066">ATP synthesis</keyword>
<keyword id="KW-0067">ATP-binding</keyword>
<keyword id="KW-0068">Autocatalytic cleavage</keyword>
<keyword id="KW-1003">Cell membrane</keyword>
<keyword id="KW-0255">Endonuclease</keyword>
<keyword id="KW-0375">Hydrogen ion transport</keyword>
<keyword id="KW-0378">Hydrolase</keyword>
<keyword id="KW-0404">Intron homing</keyword>
<keyword id="KW-0406">Ion transport</keyword>
<keyword id="KW-0472">Membrane</keyword>
<keyword id="KW-0540">Nuclease</keyword>
<keyword id="KW-0547">Nucleotide-binding</keyword>
<keyword id="KW-0651">Protein splicing</keyword>
<keyword id="KW-1278">Translocase</keyword>
<keyword id="KW-0813">Transport</keyword>
<proteinExistence type="evidence at protein level"/>
<feature type="chain" id="PRO_0000002467" description="A-type ATP synthase subunit A, 1st part" evidence="1">
    <location>
        <begin position="1"/>
        <end position="240"/>
    </location>
</feature>
<feature type="chain" id="PRO_0000002468" description="Endonuclease PI-Pho2" evidence="1">
    <location>
        <begin position="241"/>
        <end position="616"/>
    </location>
</feature>
<feature type="chain" id="PRO_0000002469" description="A-type ATP synthase subunit A, 2nd part" evidence="1">
    <location>
        <begin position="617"/>
        <end position="964"/>
    </location>
</feature>
<feature type="domain" description="DOD-type homing endonuclease">
    <location>
        <begin position="392"/>
        <end position="518"/>
    </location>
</feature>
<feature type="strand" evidence="8">
    <location>
        <begin position="20"/>
        <end position="22"/>
    </location>
</feature>
<feature type="strand" evidence="5">
    <location>
        <begin position="30"/>
        <end position="32"/>
    </location>
</feature>
<feature type="strand" evidence="9">
    <location>
        <begin position="37"/>
        <end position="41"/>
    </location>
</feature>
<feature type="strand" evidence="9">
    <location>
        <begin position="44"/>
        <end position="46"/>
    </location>
</feature>
<feature type="strand" evidence="9">
    <location>
        <begin position="49"/>
        <end position="54"/>
    </location>
</feature>
<feature type="strand" evidence="9">
    <location>
        <begin position="61"/>
        <end position="64"/>
    </location>
</feature>
<feature type="strand" evidence="6">
    <location>
        <begin position="66"/>
        <end position="70"/>
    </location>
</feature>
<feature type="strand" evidence="6">
    <location>
        <begin position="73"/>
        <end position="77"/>
    </location>
</feature>
<feature type="strand" evidence="6">
    <location>
        <begin position="84"/>
        <end position="86"/>
    </location>
</feature>
<feature type="strand" evidence="6">
    <location>
        <begin position="91"/>
        <end position="94"/>
    </location>
</feature>
<feature type="strand" evidence="6">
    <location>
        <begin position="100"/>
        <end position="102"/>
    </location>
</feature>
<feature type="strand" evidence="4">
    <location>
        <begin position="114"/>
        <end position="116"/>
    </location>
</feature>
<feature type="strand" evidence="6">
    <location>
        <begin position="118"/>
        <end position="122"/>
    </location>
</feature>
<feature type="strand" evidence="6">
    <location>
        <begin position="135"/>
        <end position="140"/>
    </location>
</feature>
<feature type="strand" evidence="6">
    <location>
        <begin position="142"/>
        <end position="144"/>
    </location>
</feature>
<feature type="strand" evidence="6">
    <location>
        <begin position="146"/>
        <end position="150"/>
    </location>
</feature>
<feature type="strand" evidence="6">
    <location>
        <begin position="157"/>
        <end position="162"/>
    </location>
</feature>
<feature type="strand" evidence="6">
    <location>
        <begin position="165"/>
        <end position="168"/>
    </location>
</feature>
<feature type="strand" evidence="6">
    <location>
        <begin position="172"/>
        <end position="178"/>
    </location>
</feature>
<feature type="strand" evidence="6">
    <location>
        <begin position="184"/>
        <end position="189"/>
    </location>
</feature>
<feature type="strand" evidence="6">
    <location>
        <begin position="191"/>
        <end position="194"/>
    </location>
</feature>
<feature type="strand" evidence="6">
    <location>
        <begin position="202"/>
        <end position="205"/>
    </location>
</feature>
<feature type="strand" evidence="6">
    <location>
        <begin position="209"/>
        <end position="211"/>
    </location>
</feature>
<feature type="helix" evidence="6">
    <location>
        <begin position="216"/>
        <end position="221"/>
    </location>
</feature>
<feature type="strand" evidence="6">
    <location>
        <begin position="229"/>
        <end position="232"/>
    </location>
</feature>
<feature type="strand" evidence="9">
    <location>
        <begin position="236"/>
        <end position="239"/>
    </location>
</feature>
<feature type="strand" evidence="11">
    <location>
        <begin position="247"/>
        <end position="250"/>
    </location>
</feature>
<feature type="turn" evidence="11">
    <location>
        <begin position="251"/>
        <end position="253"/>
    </location>
</feature>
<feature type="strand" evidence="11">
    <location>
        <begin position="254"/>
        <end position="257"/>
    </location>
</feature>
<feature type="helix" evidence="11">
    <location>
        <begin position="258"/>
        <end position="265"/>
    </location>
</feature>
<feature type="strand" evidence="11">
    <location>
        <begin position="268"/>
        <end position="274"/>
    </location>
</feature>
<feature type="strand" evidence="11">
    <location>
        <begin position="277"/>
        <end position="292"/>
    </location>
</feature>
<feature type="strand" evidence="11">
    <location>
        <begin position="295"/>
        <end position="310"/>
    </location>
</feature>
<feature type="strand" evidence="11">
    <location>
        <begin position="312"/>
        <end position="317"/>
    </location>
</feature>
<feature type="strand" evidence="11">
    <location>
        <begin position="322"/>
        <end position="325"/>
    </location>
</feature>
<feature type="strand" evidence="11">
    <location>
        <begin position="330"/>
        <end position="337"/>
    </location>
</feature>
<feature type="strand" evidence="11">
    <location>
        <begin position="340"/>
        <end position="347"/>
    </location>
</feature>
<feature type="helix" evidence="11">
    <location>
        <begin position="348"/>
        <end position="350"/>
    </location>
</feature>
<feature type="strand" evidence="11">
    <location>
        <begin position="356"/>
        <end position="361"/>
    </location>
</feature>
<feature type="helix" evidence="11">
    <location>
        <begin position="387"/>
        <end position="399"/>
    </location>
</feature>
<feature type="strand" evidence="11">
    <location>
        <begin position="406"/>
        <end position="410"/>
    </location>
</feature>
<feature type="helix" evidence="11">
    <location>
        <begin position="415"/>
        <end position="428"/>
    </location>
</feature>
<feature type="strand" evidence="11">
    <location>
        <begin position="438"/>
        <end position="446"/>
    </location>
</feature>
<feature type="helix" evidence="11">
    <location>
        <begin position="448"/>
        <end position="456"/>
    </location>
</feature>
<feature type="strand" evidence="11">
    <location>
        <begin position="461"/>
        <end position="464"/>
    </location>
</feature>
<feature type="helix" evidence="11">
    <location>
        <begin position="472"/>
        <end position="475"/>
    </location>
</feature>
<feature type="helix" evidence="11">
    <location>
        <begin position="479"/>
        <end position="489"/>
    </location>
</feature>
<feature type="strand" evidence="11">
    <location>
        <begin position="497"/>
        <end position="501"/>
    </location>
</feature>
<feature type="helix" evidence="11">
    <location>
        <begin position="503"/>
        <end position="514"/>
    </location>
</feature>
<feature type="turn" evidence="11">
    <location>
        <begin position="515"/>
        <end position="517"/>
    </location>
</feature>
<feature type="strand" evidence="11">
    <location>
        <begin position="520"/>
        <end position="525"/>
    </location>
</feature>
<feature type="strand" evidence="11">
    <location>
        <begin position="528"/>
        <end position="533"/>
    </location>
</feature>
<feature type="strand" evidence="11">
    <location>
        <begin position="540"/>
        <end position="546"/>
    </location>
</feature>
<feature type="strand" evidence="11">
    <location>
        <begin position="549"/>
        <end position="554"/>
    </location>
</feature>
<feature type="helix" evidence="11">
    <location>
        <begin position="555"/>
        <end position="565"/>
    </location>
</feature>
<feature type="strand" evidence="11">
    <location>
        <begin position="578"/>
        <end position="589"/>
    </location>
</feature>
<feature type="strand" evidence="11">
    <location>
        <begin position="593"/>
        <end position="600"/>
    </location>
</feature>
<feature type="strand" evidence="11">
    <location>
        <begin position="603"/>
        <end position="607"/>
    </location>
</feature>
<feature type="turn" evidence="11">
    <location>
        <begin position="608"/>
        <end position="611"/>
    </location>
</feature>
<feature type="strand" evidence="11">
    <location>
        <begin position="612"/>
        <end position="615"/>
    </location>
</feature>
<feature type="helix" evidence="6">
    <location>
        <begin position="617"/>
        <end position="626"/>
    </location>
</feature>
<feature type="strand" evidence="6">
    <location>
        <begin position="630"/>
        <end position="636"/>
    </location>
</feature>
<feature type="strand" evidence="6">
    <location>
        <begin position="639"/>
        <end position="642"/>
    </location>
</feature>
<feature type="helix" evidence="6">
    <location>
        <begin position="643"/>
        <end position="650"/>
    </location>
</feature>
<feature type="turn" evidence="6">
    <location>
        <begin position="651"/>
        <end position="653"/>
    </location>
</feature>
<feature type="turn" evidence="6">
    <location>
        <begin position="657"/>
        <end position="659"/>
    </location>
</feature>
<feature type="strand" evidence="6">
    <location>
        <begin position="660"/>
        <end position="662"/>
    </location>
</feature>
<feature type="helix" evidence="6">
    <location>
        <begin position="663"/>
        <end position="666"/>
    </location>
</feature>
<feature type="strand" evidence="6">
    <location>
        <begin position="667"/>
        <end position="671"/>
    </location>
</feature>
<feature type="strand" evidence="9">
    <location>
        <begin position="674"/>
        <end position="676"/>
    </location>
</feature>
<feature type="helix" evidence="6">
    <location>
        <begin position="678"/>
        <end position="697"/>
    </location>
</feature>
<feature type="strand" evidence="6">
    <location>
        <begin position="701"/>
        <end position="707"/>
    </location>
</feature>
<feature type="turn" evidence="6">
    <location>
        <begin position="709"/>
        <end position="711"/>
    </location>
</feature>
<feature type="strand" evidence="10">
    <location>
        <begin position="713"/>
        <end position="719"/>
    </location>
</feature>
<feature type="helix" evidence="6">
    <location>
        <begin position="735"/>
        <end position="744"/>
    </location>
</feature>
<feature type="strand" evidence="6">
    <location>
        <begin position="748"/>
        <end position="751"/>
    </location>
</feature>
<feature type="strand" evidence="6">
    <location>
        <begin position="753"/>
        <end position="756"/>
    </location>
</feature>
<feature type="strand" evidence="6">
    <location>
        <begin position="759"/>
        <end position="767"/>
    </location>
</feature>
<feature type="strand" evidence="9">
    <location>
        <begin position="771"/>
        <end position="775"/>
    </location>
</feature>
<feature type="helix" evidence="6">
    <location>
        <begin position="779"/>
        <end position="786"/>
    </location>
</feature>
<feature type="strand" evidence="6">
    <location>
        <begin position="788"/>
        <end position="790"/>
    </location>
</feature>
<feature type="helix" evidence="6">
    <location>
        <begin position="795"/>
        <end position="799"/>
    </location>
</feature>
<feature type="turn" evidence="6">
    <location>
        <begin position="808"/>
        <end position="810"/>
    </location>
</feature>
<feature type="strand" evidence="5">
    <location>
        <begin position="812"/>
        <end position="814"/>
    </location>
</feature>
<feature type="helix" evidence="6">
    <location>
        <begin position="816"/>
        <end position="826"/>
    </location>
</feature>
<feature type="helix" evidence="6">
    <location>
        <begin position="831"/>
        <end position="855"/>
    </location>
</feature>
<feature type="helix" evidence="7">
    <location>
        <begin position="857"/>
        <end position="859"/>
    </location>
</feature>
<feature type="helix" evidence="6">
    <location>
        <begin position="862"/>
        <end position="877"/>
    </location>
</feature>
<feature type="turn" evidence="6">
    <location>
        <begin position="886"/>
        <end position="889"/>
    </location>
</feature>
<feature type="helix" evidence="6">
    <location>
        <begin position="893"/>
        <end position="915"/>
    </location>
</feature>
<feature type="helix" evidence="6">
    <location>
        <begin position="920"/>
        <end position="924"/>
    </location>
</feature>
<feature type="helix" evidence="6">
    <location>
        <begin position="927"/>
        <end position="932"/>
    </location>
</feature>
<feature type="helix" evidence="6">
    <location>
        <begin position="933"/>
        <end position="937"/>
    </location>
</feature>
<feature type="helix" evidence="6">
    <location>
        <begin position="941"/>
        <end position="945"/>
    </location>
</feature>
<feature type="helix" evidence="6">
    <location>
        <begin position="947"/>
        <end position="962"/>
    </location>
</feature>
<comment type="function">
    <text evidence="2">Component of the A-type ATP synthase that produces ATP from ADP in the presence of a proton gradient across the membrane. The A chain is the catalytic subunit.</text>
</comment>
<comment type="catalytic activity">
    <reaction evidence="2">
        <text>ATP + H2O + 4 H(+)(in) = ADP + phosphate + 5 H(+)(out)</text>
        <dbReference type="Rhea" id="RHEA:57720"/>
        <dbReference type="ChEBI" id="CHEBI:15377"/>
        <dbReference type="ChEBI" id="CHEBI:15378"/>
        <dbReference type="ChEBI" id="CHEBI:30616"/>
        <dbReference type="ChEBI" id="CHEBI:43474"/>
        <dbReference type="ChEBI" id="CHEBI:456216"/>
        <dbReference type="EC" id="7.1.2.2"/>
    </reaction>
</comment>
<comment type="subunit">
    <text evidence="2">Has multiple subunits with at least A(3), B(3), C, D, E, F, H, I and proteolipid K(x).</text>
</comment>
<comment type="subcellular location">
    <subcellularLocation>
        <location evidence="2">Cell membrane</location>
        <topology evidence="2">Peripheral membrane protein</topology>
    </subcellularLocation>
</comment>
<comment type="PTM">
    <text evidence="3">This protein undergoes a protein self splicing that involves a post-translational excision of the VDE intervening region (intein) followed by peptide ligation.</text>
</comment>
<comment type="miscellaneous">
    <text>The intein interrupts the ATP-binding site.</text>
</comment>
<comment type="similarity">
    <text evidence="2">Belongs to the ATPase alpha/beta chains family.</text>
</comment>
<dbReference type="EC" id="7.1.2.2" evidence="2"/>
<dbReference type="EC" id="3.1.-.-"/>
<dbReference type="EMBL" id="BA000001">
    <property type="protein sequence ID" value="BAA31102.1"/>
    <property type="molecule type" value="Genomic_DNA"/>
</dbReference>
<dbReference type="PIR" id="G71213">
    <property type="entry name" value="G71213"/>
</dbReference>
<dbReference type="RefSeq" id="WP_010886039.1">
    <property type="nucleotide sequence ID" value="NC_000961.1"/>
</dbReference>
<dbReference type="PDB" id="1VDZ">
    <property type="method" value="X-ray"/>
    <property type="resolution" value="2.55 A"/>
    <property type="chains" value="A=1-964"/>
</dbReference>
<dbReference type="PDB" id="3I4L">
    <property type="method" value="X-ray"/>
    <property type="resolution" value="2.40 A"/>
    <property type="chains" value="A=1-964"/>
</dbReference>
<dbReference type="PDB" id="3I72">
    <property type="method" value="X-ray"/>
    <property type="resolution" value="2.47 A"/>
    <property type="chains" value="A=1-964"/>
</dbReference>
<dbReference type="PDB" id="3I73">
    <property type="method" value="X-ray"/>
    <property type="resolution" value="2.40 A"/>
    <property type="chains" value="A=1-964"/>
</dbReference>
<dbReference type="PDB" id="3IKJ">
    <property type="method" value="X-ray"/>
    <property type="resolution" value="2.40 A"/>
    <property type="chains" value="A=1-964"/>
</dbReference>
<dbReference type="PDB" id="3M4Y">
    <property type="method" value="X-ray"/>
    <property type="resolution" value="2.38 A"/>
    <property type="chains" value="A=1-964"/>
</dbReference>
<dbReference type="PDB" id="3MFY">
    <property type="method" value="X-ray"/>
    <property type="resolution" value="2.35 A"/>
    <property type="chains" value="A=1-964"/>
</dbReference>
<dbReference type="PDB" id="3ND8">
    <property type="method" value="X-ray"/>
    <property type="resolution" value="2.40 A"/>
    <property type="chains" value="A=1-964"/>
</dbReference>
<dbReference type="PDB" id="3ND9">
    <property type="method" value="X-ray"/>
    <property type="resolution" value="3.10 A"/>
    <property type="chains" value="A=1-964"/>
</dbReference>
<dbReference type="PDB" id="3P20">
    <property type="method" value="X-ray"/>
    <property type="resolution" value="2.85 A"/>
    <property type="chains" value="A=1-964"/>
</dbReference>
<dbReference type="PDB" id="3QG1">
    <property type="method" value="X-ray"/>
    <property type="resolution" value="2.95 A"/>
    <property type="chains" value="A=1-238, A=617-964"/>
</dbReference>
<dbReference type="PDB" id="3QIA">
    <property type="method" value="X-ray"/>
    <property type="resolution" value="2.60 A"/>
    <property type="chains" value="A=1-964"/>
</dbReference>
<dbReference type="PDB" id="3QJY">
    <property type="method" value="X-ray"/>
    <property type="resolution" value="2.35 A"/>
    <property type="chains" value="A=1-964"/>
</dbReference>
<dbReference type="PDB" id="3SDZ">
    <property type="method" value="X-ray"/>
    <property type="resolution" value="2.53 A"/>
    <property type="chains" value="A=1-964"/>
</dbReference>
<dbReference type="PDB" id="3SE0">
    <property type="method" value="X-ray"/>
    <property type="resolution" value="2.62 A"/>
    <property type="chains" value="A=1-964"/>
</dbReference>
<dbReference type="PDB" id="5X09">
    <property type="method" value="X-ray"/>
    <property type="resolution" value="2.35 A"/>
    <property type="chains" value="A=51-964"/>
</dbReference>
<dbReference type="PDB" id="7QST">
    <property type="method" value="X-ray"/>
    <property type="resolution" value="2.49 A"/>
    <property type="chains" value="A=238-616"/>
</dbReference>
<dbReference type="PDBsum" id="1VDZ"/>
<dbReference type="PDBsum" id="3I4L"/>
<dbReference type="PDBsum" id="3I72"/>
<dbReference type="PDBsum" id="3I73"/>
<dbReference type="PDBsum" id="3IKJ"/>
<dbReference type="PDBsum" id="3M4Y"/>
<dbReference type="PDBsum" id="3MFY"/>
<dbReference type="PDBsum" id="3ND8"/>
<dbReference type="PDBsum" id="3ND9"/>
<dbReference type="PDBsum" id="3P20"/>
<dbReference type="PDBsum" id="3QG1"/>
<dbReference type="PDBsum" id="3QIA"/>
<dbReference type="PDBsum" id="3QJY"/>
<dbReference type="PDBsum" id="3SDZ"/>
<dbReference type="PDBsum" id="3SE0"/>
<dbReference type="PDBsum" id="5X09"/>
<dbReference type="PDBsum" id="7QST"/>
<dbReference type="SMR" id="O57728"/>
<dbReference type="STRING" id="70601.gene:9378988"/>
<dbReference type="EnsemblBacteria" id="BAA31102">
    <property type="protein sequence ID" value="BAA31102"/>
    <property type="gene ID" value="BAA31102"/>
</dbReference>
<dbReference type="GeneID" id="1442821"/>
<dbReference type="KEGG" id="pho:PH1975"/>
<dbReference type="eggNOG" id="arCOG00868">
    <property type="taxonomic scope" value="Archaea"/>
</dbReference>
<dbReference type="eggNOG" id="arCOG03154">
    <property type="taxonomic scope" value="Archaea"/>
</dbReference>
<dbReference type="OrthoDB" id="115235at2157"/>
<dbReference type="BRENDA" id="7.1.2.2">
    <property type="organism ID" value="5244"/>
</dbReference>
<dbReference type="EvolutionaryTrace" id="O57728"/>
<dbReference type="Proteomes" id="UP000000752">
    <property type="component" value="Chromosome"/>
</dbReference>
<dbReference type="GO" id="GO:0005886">
    <property type="term" value="C:plasma membrane"/>
    <property type="evidence" value="ECO:0007669"/>
    <property type="project" value="UniProtKB-SubCell"/>
</dbReference>
<dbReference type="GO" id="GO:0005524">
    <property type="term" value="F:ATP binding"/>
    <property type="evidence" value="ECO:0007669"/>
    <property type="project" value="UniProtKB-UniRule"/>
</dbReference>
<dbReference type="GO" id="GO:0004519">
    <property type="term" value="F:endonuclease activity"/>
    <property type="evidence" value="ECO:0007669"/>
    <property type="project" value="UniProtKB-KW"/>
</dbReference>
<dbReference type="GO" id="GO:0046933">
    <property type="term" value="F:proton-transporting ATP synthase activity, rotational mechanism"/>
    <property type="evidence" value="ECO:0007669"/>
    <property type="project" value="UniProtKB-UniRule"/>
</dbReference>
<dbReference type="GO" id="GO:0046961">
    <property type="term" value="F:proton-transporting ATPase activity, rotational mechanism"/>
    <property type="evidence" value="ECO:0007669"/>
    <property type="project" value="InterPro"/>
</dbReference>
<dbReference type="GO" id="GO:0016539">
    <property type="term" value="P:intein-mediated protein splicing"/>
    <property type="evidence" value="ECO:0007669"/>
    <property type="project" value="InterPro"/>
</dbReference>
<dbReference type="GO" id="GO:0006314">
    <property type="term" value="P:intron homing"/>
    <property type="evidence" value="ECO:0007669"/>
    <property type="project" value="UniProtKB-KW"/>
</dbReference>
<dbReference type="GO" id="GO:0042777">
    <property type="term" value="P:proton motive force-driven plasma membrane ATP synthesis"/>
    <property type="evidence" value="ECO:0007669"/>
    <property type="project" value="UniProtKB-UniRule"/>
</dbReference>
<dbReference type="CDD" id="cd18111">
    <property type="entry name" value="ATP-synt_V_A-type_alpha_C"/>
    <property type="match status" value="1"/>
</dbReference>
<dbReference type="CDD" id="cd18119">
    <property type="entry name" value="ATP-synt_V_A-type_alpha_N"/>
    <property type="match status" value="1"/>
</dbReference>
<dbReference type="CDD" id="cd00081">
    <property type="entry name" value="Hint"/>
    <property type="match status" value="1"/>
</dbReference>
<dbReference type="CDD" id="cd01134">
    <property type="entry name" value="V_A-ATPase_A"/>
    <property type="match status" value="1"/>
</dbReference>
<dbReference type="FunFam" id="1.10.1140.10:FF:000002">
    <property type="entry name" value="V-type proton ATPase catalytic subunit A"/>
    <property type="match status" value="1"/>
</dbReference>
<dbReference type="FunFam" id="2.40.30.20:FF:000002">
    <property type="entry name" value="V-type proton ATPase catalytic subunit A"/>
    <property type="match status" value="1"/>
</dbReference>
<dbReference type="FunFam" id="2.40.50.100:FF:000008">
    <property type="entry name" value="V-type proton ATPase catalytic subunit A"/>
    <property type="match status" value="1"/>
</dbReference>
<dbReference type="Gene3D" id="2.40.30.20">
    <property type="match status" value="1"/>
</dbReference>
<dbReference type="Gene3D" id="2.40.50.100">
    <property type="match status" value="1"/>
</dbReference>
<dbReference type="Gene3D" id="1.10.1140.10">
    <property type="entry name" value="Bovine Mitochondrial F1-atpase, Atp Synthase Beta Chain, Chain D, domain 3"/>
    <property type="match status" value="1"/>
</dbReference>
<dbReference type="Gene3D" id="2.170.16.10">
    <property type="entry name" value="Hedgehog/Intein (Hint) domain"/>
    <property type="match status" value="2"/>
</dbReference>
<dbReference type="Gene3D" id="3.10.28.10">
    <property type="entry name" value="Homing endonucleases"/>
    <property type="match status" value="1"/>
</dbReference>
<dbReference type="Gene3D" id="3.40.50.300">
    <property type="entry name" value="P-loop containing nucleotide triphosphate hydrolases"/>
    <property type="match status" value="2"/>
</dbReference>
<dbReference type="HAMAP" id="MF_00309">
    <property type="entry name" value="ATP_synth_A_arch"/>
    <property type="match status" value="1"/>
</dbReference>
<dbReference type="InterPro" id="IPR055190">
    <property type="entry name" value="ATP-synt_VA_C"/>
</dbReference>
<dbReference type="InterPro" id="IPR031686">
    <property type="entry name" value="ATP-synth_a_Xtn"/>
</dbReference>
<dbReference type="InterPro" id="IPR023366">
    <property type="entry name" value="ATP_synth_asu-like_sf"/>
</dbReference>
<dbReference type="InterPro" id="IPR020003">
    <property type="entry name" value="ATPase_a/bsu_AS"/>
</dbReference>
<dbReference type="InterPro" id="IPR004100">
    <property type="entry name" value="ATPase_F1/V1/A1_a/bsu_N"/>
</dbReference>
<dbReference type="InterPro" id="IPR036121">
    <property type="entry name" value="ATPase_F1/V1/A1_a/bsu_N_sf"/>
</dbReference>
<dbReference type="InterPro" id="IPR000194">
    <property type="entry name" value="ATPase_F1/V1/A1_a/bsu_nucl-bd"/>
</dbReference>
<dbReference type="InterPro" id="IPR024034">
    <property type="entry name" value="ATPase_F1/V1_b/a_C"/>
</dbReference>
<dbReference type="InterPro" id="IPR003586">
    <property type="entry name" value="Hint_dom_C"/>
</dbReference>
<dbReference type="InterPro" id="IPR003587">
    <property type="entry name" value="Hint_dom_N"/>
</dbReference>
<dbReference type="InterPro" id="IPR036844">
    <property type="entry name" value="Hint_dom_sf"/>
</dbReference>
<dbReference type="InterPro" id="IPR027434">
    <property type="entry name" value="Homing_endonucl"/>
</dbReference>
<dbReference type="InterPro" id="IPR030934">
    <property type="entry name" value="Intein_C"/>
</dbReference>
<dbReference type="InterPro" id="IPR004042">
    <property type="entry name" value="Intein_endonuc_central"/>
</dbReference>
<dbReference type="InterPro" id="IPR006141">
    <property type="entry name" value="Intein_N"/>
</dbReference>
<dbReference type="InterPro" id="IPR027417">
    <property type="entry name" value="P-loop_NTPase"/>
</dbReference>
<dbReference type="InterPro" id="IPR022878">
    <property type="entry name" value="V-ATPase_asu"/>
</dbReference>
<dbReference type="NCBIfam" id="TIGR01443">
    <property type="entry name" value="intein_Cterm"/>
    <property type="match status" value="1"/>
</dbReference>
<dbReference type="NCBIfam" id="TIGR01445">
    <property type="entry name" value="intein_Nterm"/>
    <property type="match status" value="1"/>
</dbReference>
<dbReference type="NCBIfam" id="NF003220">
    <property type="entry name" value="PRK04192.1"/>
    <property type="match status" value="1"/>
</dbReference>
<dbReference type="PANTHER" id="PTHR43607:SF1">
    <property type="entry name" value="H(+)-TRANSPORTING TWO-SECTOR ATPASE"/>
    <property type="match status" value="1"/>
</dbReference>
<dbReference type="PANTHER" id="PTHR43607">
    <property type="entry name" value="V-TYPE PROTON ATPASE CATALYTIC SUBUNIT A"/>
    <property type="match status" value="1"/>
</dbReference>
<dbReference type="Pfam" id="PF00006">
    <property type="entry name" value="ATP-synt_ab"/>
    <property type="match status" value="1"/>
</dbReference>
<dbReference type="Pfam" id="PF02874">
    <property type="entry name" value="ATP-synt_ab_N"/>
    <property type="match status" value="1"/>
</dbReference>
<dbReference type="Pfam" id="PF16886">
    <property type="entry name" value="ATP-synt_ab_Xtn"/>
    <property type="match status" value="1"/>
</dbReference>
<dbReference type="Pfam" id="PF22919">
    <property type="entry name" value="ATP-synt_VA_C"/>
    <property type="match status" value="1"/>
</dbReference>
<dbReference type="Pfam" id="PF14890">
    <property type="entry name" value="Intein_splicing"/>
    <property type="match status" value="1"/>
</dbReference>
<dbReference type="SMART" id="SM00305">
    <property type="entry name" value="HintC"/>
    <property type="match status" value="1"/>
</dbReference>
<dbReference type="SMART" id="SM00306">
    <property type="entry name" value="HintN"/>
    <property type="match status" value="1"/>
</dbReference>
<dbReference type="SUPFAM" id="SSF47917">
    <property type="entry name" value="C-terminal domain of alpha and beta subunits of F1 ATP synthase"/>
    <property type="match status" value="1"/>
</dbReference>
<dbReference type="SUPFAM" id="SSF51294">
    <property type="entry name" value="Hedgehog/intein (Hint) domain"/>
    <property type="match status" value="1"/>
</dbReference>
<dbReference type="SUPFAM" id="SSF55608">
    <property type="entry name" value="Homing endonucleases"/>
    <property type="match status" value="1"/>
</dbReference>
<dbReference type="SUPFAM" id="SSF50615">
    <property type="entry name" value="N-terminal domain of alpha and beta subunits of F1 ATP synthase"/>
    <property type="match status" value="1"/>
</dbReference>
<dbReference type="SUPFAM" id="SSF52540">
    <property type="entry name" value="P-loop containing nucleoside triphosphate hydrolases"/>
    <property type="match status" value="2"/>
</dbReference>
<dbReference type="PROSITE" id="PS00152">
    <property type="entry name" value="ATPASE_ALPHA_BETA"/>
    <property type="match status" value="1"/>
</dbReference>
<dbReference type="PROSITE" id="PS50818">
    <property type="entry name" value="INTEIN_C_TER"/>
    <property type="match status" value="1"/>
</dbReference>
<dbReference type="PROSITE" id="PS50819">
    <property type="entry name" value="INTEIN_ENDONUCLEASE"/>
    <property type="match status" value="1"/>
</dbReference>
<dbReference type="PROSITE" id="PS50817">
    <property type="entry name" value="INTEIN_N_TER"/>
    <property type="match status" value="1"/>
</dbReference>
<organism>
    <name type="scientific">Pyrococcus horikoshii (strain ATCC 700860 / DSM 12428 / JCM 9974 / NBRC 100139 / OT-3)</name>
    <dbReference type="NCBI Taxonomy" id="70601"/>
    <lineage>
        <taxon>Archaea</taxon>
        <taxon>Methanobacteriati</taxon>
        <taxon>Methanobacteriota</taxon>
        <taxon>Thermococci</taxon>
        <taxon>Thermococcales</taxon>
        <taxon>Thermococcaceae</taxon>
        <taxon>Pyrococcus</taxon>
    </lineage>
</organism>
<protein>
    <recommendedName>
        <fullName evidence="2">A-type ATP synthase subunit A</fullName>
        <ecNumber evidence="2">7.1.2.2</ecNumber>
    </recommendedName>
    <component>
        <recommendedName>
            <fullName>Endonuclease PI-Pho2</fullName>
            <ecNumber>3.1.-.-</ecNumber>
        </recommendedName>
        <alternativeName>
            <fullName>Pho AtpA intein</fullName>
        </alternativeName>
        <alternativeName>
            <fullName>Pho VMA intein</fullName>
        </alternativeName>
    </component>
</protein>
<sequence length="964" mass="107855">MVAKGRIIRVTGPLVVADGMKGAKMYEVVRVGELGLIGEIIRLEGDKAVIQVYEETAGVRPGEPVVGTGASLSVELGPGLLTSIYDGIQRPLEVIREKTGDFIARGVTAPALPRDKKWHFIPKAKVGDKVVGGDIIGEVPETSIIVHKIMVPPGIEGEIVEIAEEGDYTIEEVIAKVKTPSGEIKELKMYQRWPVRVKRPYKEKLPPEVPLITGQRVIDTFFPQAKGGTAAIPGPFGSGKCVDGDTLVLTKEFGLIKIKELYEKLDGKGRKIVEGNEEWTELEKPITVYGYKDGKIVEIKATHVYKGVSSGMVEIRTRTGRKIKVTPIHRLFTGRVTKDGLILKEVMAMHVKPGDRIAVVKKIDGGEYIKLDSSNVGEIKVPEILNEELAEFLGYLMANGTLKSGIIEIYCDDESLLERVNSLSLKLFGVGGRIVQKVDGKALVIQSKPLVDVLRRLGVPEDKKVENWKVPRELLLSPSNVVRAFVNAYIKGKEEVEITLASEEGAYELSYLFAKLGIYVTISKSGEYYKVRVSRRGNLDTIPVEVNGMPKVLPYEDFRKFAKSIGLEEVAENHLQHIIFDEVIDVRYIPEPQEVYDVTTETHNFVGGNMPTLLHNTVTQHQLAKWSDAQVVIYIGCGERGNEMTDVLEEFPKLKDPKTGKPLMERTVLIANTSNMPVAAREASIYTGITIAEYFRDMGYDVALMADSTSRWAEALREISGRLEEMPGEEGYPAYLASKLAEFYERAGRVVTLGSDYRVGSVSVIGAVSPPGGDFSEPVVQNTLRVVKVFWALDADLARRRHFPAINWLTSYSLYVDAVKDWWHKNIDPEWKAMRDKAMALLQKESELQEIVRIVGPDALPERERAILLVARMLREDYLQQDAFDEVDTYCPPEKQVTMMRVLLNFYDKTMEAINRGVPLEEIAKLPVREEIGRMKFERDVSKIRSLIDKTNEQFEELFKKYGA</sequence>
<reference key="1">
    <citation type="journal article" date="1998" name="DNA Res.">
        <title>Complete sequence and gene organization of the genome of a hyper-thermophilic archaebacterium, Pyrococcus horikoshii OT3.</title>
        <authorList>
            <person name="Kawarabayasi Y."/>
            <person name="Sawada M."/>
            <person name="Horikawa H."/>
            <person name="Haikawa Y."/>
            <person name="Hino Y."/>
            <person name="Yamamoto S."/>
            <person name="Sekine M."/>
            <person name="Baba S."/>
            <person name="Kosugi H."/>
            <person name="Hosoyama A."/>
            <person name="Nagai Y."/>
            <person name="Sakai M."/>
            <person name="Ogura K."/>
            <person name="Otsuka R."/>
            <person name="Nakazawa H."/>
            <person name="Takamiya M."/>
            <person name="Ohfuku Y."/>
            <person name="Funahashi T."/>
            <person name="Tanaka T."/>
            <person name="Kudoh Y."/>
            <person name="Yamazaki J."/>
            <person name="Kushida N."/>
            <person name="Oguchi A."/>
            <person name="Aoki K."/>
            <person name="Yoshizawa T."/>
            <person name="Nakamura Y."/>
            <person name="Robb F.T."/>
            <person name="Horikoshi K."/>
            <person name="Masuchi Y."/>
            <person name="Shizuya H."/>
            <person name="Kikuchi H."/>
        </authorList>
    </citation>
    <scope>NUCLEOTIDE SEQUENCE [LARGE SCALE GENOMIC DNA]</scope>
    <source>
        <strain>ATCC 700860 / DSM 12428 / JCM 9974 / NBRC 100139 / OT-3</strain>
    </source>
</reference>
<accession>O57728</accession>
<evidence type="ECO:0000255" key="1"/>
<evidence type="ECO:0000255" key="2">
    <source>
        <dbReference type="HAMAP-Rule" id="MF_00309"/>
    </source>
</evidence>
<evidence type="ECO:0000305" key="3"/>
<evidence type="ECO:0007829" key="4">
    <source>
        <dbReference type="PDB" id="3I4L"/>
    </source>
</evidence>
<evidence type="ECO:0007829" key="5">
    <source>
        <dbReference type="PDB" id="3M4Y"/>
    </source>
</evidence>
<evidence type="ECO:0007829" key="6">
    <source>
        <dbReference type="PDB" id="3MFY"/>
    </source>
</evidence>
<evidence type="ECO:0007829" key="7">
    <source>
        <dbReference type="PDB" id="3ND9"/>
    </source>
</evidence>
<evidence type="ECO:0007829" key="8">
    <source>
        <dbReference type="PDB" id="3QIA"/>
    </source>
</evidence>
<evidence type="ECO:0007829" key="9">
    <source>
        <dbReference type="PDB" id="3QJY"/>
    </source>
</evidence>
<evidence type="ECO:0007829" key="10">
    <source>
        <dbReference type="PDB" id="3SE0"/>
    </source>
</evidence>
<evidence type="ECO:0007829" key="11">
    <source>
        <dbReference type="PDB" id="7QST"/>
    </source>
</evidence>